<feature type="chain" id="PRO_0000316276" description="Signal peptidase I">
    <location>
        <begin position="1"/>
        <end position="266"/>
    </location>
</feature>
<feature type="topological domain" description="Cytoplasmic" evidence="2">
    <location>
        <begin position="1"/>
        <end position="20"/>
    </location>
</feature>
<feature type="transmembrane region" description="Helical" evidence="2">
    <location>
        <begin position="21"/>
        <end position="41"/>
    </location>
</feature>
<feature type="topological domain" description="Periplasmic" evidence="2">
    <location>
        <begin position="42"/>
        <end position="266"/>
    </location>
</feature>
<feature type="active site" evidence="1">
    <location>
        <position position="45"/>
    </location>
</feature>
<feature type="active site" evidence="1">
    <location>
        <position position="108"/>
    </location>
</feature>
<accession>A8F0M1</accession>
<gene>
    <name type="primary">lepB</name>
    <name type="ordered locus">RMA_0163</name>
</gene>
<organism>
    <name type="scientific">Rickettsia massiliae (strain Mtu5)</name>
    <dbReference type="NCBI Taxonomy" id="416276"/>
    <lineage>
        <taxon>Bacteria</taxon>
        <taxon>Pseudomonadati</taxon>
        <taxon>Pseudomonadota</taxon>
        <taxon>Alphaproteobacteria</taxon>
        <taxon>Rickettsiales</taxon>
        <taxon>Rickettsiaceae</taxon>
        <taxon>Rickettsieae</taxon>
        <taxon>Rickettsia</taxon>
        <taxon>spotted fever group</taxon>
    </lineage>
</organism>
<reference key="1">
    <citation type="journal article" date="2007" name="Genome Res.">
        <title>Lateral gene transfer between obligate intracellular bacteria: evidence from the Rickettsia massiliae genome.</title>
        <authorList>
            <person name="Blanc G."/>
            <person name="Ogata H."/>
            <person name="Robert C."/>
            <person name="Audic S."/>
            <person name="Claverie J.-M."/>
            <person name="Raoult D."/>
        </authorList>
    </citation>
    <scope>NUCLEOTIDE SEQUENCE [LARGE SCALE GENOMIC DNA]</scope>
    <source>
        <strain>Mtu5</strain>
    </source>
</reference>
<dbReference type="EC" id="3.4.21.89"/>
<dbReference type="EMBL" id="CP000683">
    <property type="protein sequence ID" value="ABV84457.1"/>
    <property type="status" value="ALT_INIT"/>
    <property type="molecule type" value="Genomic_DNA"/>
</dbReference>
<dbReference type="RefSeq" id="WP_041404492.1">
    <property type="nucleotide sequence ID" value="NC_009900.1"/>
</dbReference>
<dbReference type="SMR" id="A8F0M1"/>
<dbReference type="MEROPS" id="S26.001"/>
<dbReference type="KEGG" id="rms:RMA_0163"/>
<dbReference type="HOGENOM" id="CLU_028723_1_2_5"/>
<dbReference type="Proteomes" id="UP000001311">
    <property type="component" value="Chromosome"/>
</dbReference>
<dbReference type="GO" id="GO:0005886">
    <property type="term" value="C:plasma membrane"/>
    <property type="evidence" value="ECO:0007669"/>
    <property type="project" value="UniProtKB-SubCell"/>
</dbReference>
<dbReference type="GO" id="GO:0004252">
    <property type="term" value="F:serine-type endopeptidase activity"/>
    <property type="evidence" value="ECO:0007669"/>
    <property type="project" value="UniProtKB-EC"/>
</dbReference>
<dbReference type="GO" id="GO:0006465">
    <property type="term" value="P:signal peptide processing"/>
    <property type="evidence" value="ECO:0007669"/>
    <property type="project" value="InterPro"/>
</dbReference>
<dbReference type="CDD" id="cd06530">
    <property type="entry name" value="S26_SPase_I"/>
    <property type="match status" value="1"/>
</dbReference>
<dbReference type="Gene3D" id="2.10.109.10">
    <property type="entry name" value="Umud Fragment, subunit A"/>
    <property type="match status" value="1"/>
</dbReference>
<dbReference type="InterPro" id="IPR036286">
    <property type="entry name" value="LexA/Signal_pep-like_sf"/>
</dbReference>
<dbReference type="InterPro" id="IPR000223">
    <property type="entry name" value="Pept_S26A_signal_pept_1"/>
</dbReference>
<dbReference type="InterPro" id="IPR019758">
    <property type="entry name" value="Pept_S26A_signal_pept_1_CS"/>
</dbReference>
<dbReference type="InterPro" id="IPR019757">
    <property type="entry name" value="Pept_S26A_signal_pept_1_Lys-AS"/>
</dbReference>
<dbReference type="InterPro" id="IPR019533">
    <property type="entry name" value="Peptidase_S26"/>
</dbReference>
<dbReference type="NCBIfam" id="TIGR02227">
    <property type="entry name" value="sigpep_I_bact"/>
    <property type="match status" value="1"/>
</dbReference>
<dbReference type="PANTHER" id="PTHR43390:SF1">
    <property type="entry name" value="CHLOROPLAST PROCESSING PEPTIDASE"/>
    <property type="match status" value="1"/>
</dbReference>
<dbReference type="PANTHER" id="PTHR43390">
    <property type="entry name" value="SIGNAL PEPTIDASE I"/>
    <property type="match status" value="1"/>
</dbReference>
<dbReference type="Pfam" id="PF10502">
    <property type="entry name" value="Peptidase_S26"/>
    <property type="match status" value="1"/>
</dbReference>
<dbReference type="PRINTS" id="PR00727">
    <property type="entry name" value="LEADERPTASE"/>
</dbReference>
<dbReference type="SUPFAM" id="SSF51306">
    <property type="entry name" value="LexA/Signal peptidase"/>
    <property type="match status" value="1"/>
</dbReference>
<dbReference type="PROSITE" id="PS00760">
    <property type="entry name" value="SPASE_I_2"/>
    <property type="match status" value="1"/>
</dbReference>
<dbReference type="PROSITE" id="PS00761">
    <property type="entry name" value="SPASE_I_3"/>
    <property type="match status" value="1"/>
</dbReference>
<evidence type="ECO:0000250" key="1"/>
<evidence type="ECO:0000255" key="2"/>
<evidence type="ECO:0000305" key="3"/>
<name>LEP_RICM5</name>
<proteinExistence type="inferred from homology"/>
<comment type="catalytic activity">
    <reaction>
        <text>Cleavage of hydrophobic, N-terminal signal or leader sequences from secreted and periplasmic proteins.</text>
        <dbReference type="EC" id="3.4.21.89"/>
    </reaction>
</comment>
<comment type="subcellular location">
    <subcellularLocation>
        <location evidence="3">Cell inner membrane</location>
        <topology evidence="3">Single-pass type II membrane protein</topology>
    </subcellularLocation>
</comment>
<comment type="similarity">
    <text evidence="3">Belongs to the peptidase S26 family.</text>
</comment>
<comment type="sequence caution" evidence="3">
    <conflict type="erroneous initiation">
        <sequence resource="EMBL-CDS" id="ABV84457"/>
    </conflict>
</comment>
<keyword id="KW-0997">Cell inner membrane</keyword>
<keyword id="KW-1003">Cell membrane</keyword>
<keyword id="KW-0378">Hydrolase</keyword>
<keyword id="KW-0472">Membrane</keyword>
<keyword id="KW-0812">Transmembrane</keyword>
<keyword id="KW-1133">Transmembrane helix</keyword>
<protein>
    <recommendedName>
        <fullName>Signal peptidase I</fullName>
        <shortName>SPase I</shortName>
        <ecNumber>3.4.21.89</ecNumber>
    </recommendedName>
    <alternativeName>
        <fullName>Leader peptidase I</fullName>
    </alternativeName>
</protein>
<sequence length="266" mass="31190">MQTDNTKSNTNKTAKQEWGSFVFVICIALLIRILIMEPFTVPTGSMKATILENDYIFSTKYSYGYSNYSLSFFDFIPLFKGRIFAREPERGDIVVFRPPHDMSVRYIKRLIGLPGDKIQLIDDVIYINDKKIERTEVGTYISEEGIKYLKFKETLPNGRTYFSYKLAPIYGVIYNDRYGNTDVFYVPEGKYFFLGDNRDQSNDSRVNLGFVPFENFIAKAQFIWFSTKITWWDNDIGVINLVLKLKPWIESVRLNRIFRNLYNTDV</sequence>